<gene>
    <name type="primary">MAN4</name>
</gene>
<name>MAN4_SOLLC</name>
<dbReference type="EC" id="3.2.1.78"/>
<dbReference type="EMBL" id="AY046588">
    <property type="protein sequence ID" value="AAK97760.1"/>
    <property type="molecule type" value="mRNA"/>
</dbReference>
<dbReference type="EMBL" id="AY046589">
    <property type="protein sequence ID" value="AAK97759.2"/>
    <property type="molecule type" value="mRNA"/>
</dbReference>
<dbReference type="EMBL" id="AY034075">
    <property type="protein sequence ID" value="AAK56557.1"/>
    <property type="molecule type" value="mRNA"/>
</dbReference>
<dbReference type="RefSeq" id="NP_001234131.1">
    <property type="nucleotide sequence ID" value="NM_001247202.2"/>
</dbReference>
<dbReference type="PDB" id="1RH9">
    <property type="method" value="X-ray"/>
    <property type="resolution" value="1.50 A"/>
    <property type="chains" value="A=27-399"/>
</dbReference>
<dbReference type="PDBsum" id="1RH9"/>
<dbReference type="SMR" id="Q8L5J1"/>
<dbReference type="STRING" id="4081.Q8L5J1"/>
<dbReference type="CAZy" id="GH5">
    <property type="family name" value="Glycoside Hydrolase Family 5"/>
</dbReference>
<dbReference type="PaxDb" id="4081-Solyc01g008710.2.1"/>
<dbReference type="GeneID" id="543823"/>
<dbReference type="KEGG" id="sly:543823"/>
<dbReference type="eggNOG" id="ENOG502QS4Q">
    <property type="taxonomic scope" value="Eukaryota"/>
</dbReference>
<dbReference type="HOGENOM" id="CLU_031603_0_0_1"/>
<dbReference type="InParanoid" id="Q8L5J1"/>
<dbReference type="OrthoDB" id="406631at2759"/>
<dbReference type="PhylomeDB" id="Q8L5J1"/>
<dbReference type="BRENDA" id="3.2.1.78">
    <property type="organism ID" value="3101"/>
</dbReference>
<dbReference type="EvolutionaryTrace" id="Q8L5J1"/>
<dbReference type="Proteomes" id="UP000004994">
    <property type="component" value="Unplaced"/>
</dbReference>
<dbReference type="ExpressionAtlas" id="Q8L5J1">
    <property type="expression patterns" value="baseline"/>
</dbReference>
<dbReference type="GO" id="GO:0005576">
    <property type="term" value="C:extracellular region"/>
    <property type="evidence" value="ECO:0007669"/>
    <property type="project" value="UniProtKB-SubCell"/>
</dbReference>
<dbReference type="GO" id="GO:0016985">
    <property type="term" value="F:mannan endo-1,4-beta-mannosidase activity"/>
    <property type="evidence" value="ECO:0000318"/>
    <property type="project" value="GO_Central"/>
</dbReference>
<dbReference type="FunFam" id="3.20.20.80:FF:000012">
    <property type="entry name" value="Mannan endo-1,4-beta-mannosidase 6"/>
    <property type="match status" value="1"/>
</dbReference>
<dbReference type="Gene3D" id="3.20.20.80">
    <property type="entry name" value="Glycosidases"/>
    <property type="match status" value="1"/>
</dbReference>
<dbReference type="InterPro" id="IPR017853">
    <property type="entry name" value="Glycoside_hydrolase_SF"/>
</dbReference>
<dbReference type="InterPro" id="IPR045053">
    <property type="entry name" value="MAN-like"/>
</dbReference>
<dbReference type="PANTHER" id="PTHR31451">
    <property type="match status" value="1"/>
</dbReference>
<dbReference type="PANTHER" id="PTHR31451:SF39">
    <property type="entry name" value="MANNAN ENDO-1,4-BETA-MANNOSIDASE 1"/>
    <property type="match status" value="1"/>
</dbReference>
<dbReference type="SUPFAM" id="SSF51445">
    <property type="entry name" value="(Trans)glycosidases"/>
    <property type="match status" value="1"/>
</dbReference>
<organism>
    <name type="scientific">Solanum lycopersicum</name>
    <name type="common">Tomato</name>
    <name type="synonym">Lycopersicon esculentum</name>
    <dbReference type="NCBI Taxonomy" id="4081"/>
    <lineage>
        <taxon>Eukaryota</taxon>
        <taxon>Viridiplantae</taxon>
        <taxon>Streptophyta</taxon>
        <taxon>Embryophyta</taxon>
        <taxon>Tracheophyta</taxon>
        <taxon>Spermatophyta</taxon>
        <taxon>Magnoliopsida</taxon>
        <taxon>eudicotyledons</taxon>
        <taxon>Gunneridae</taxon>
        <taxon>Pentapetalae</taxon>
        <taxon>asterids</taxon>
        <taxon>lamiids</taxon>
        <taxon>Solanales</taxon>
        <taxon>Solanaceae</taxon>
        <taxon>Solanoideae</taxon>
        <taxon>Solaneae</taxon>
        <taxon>Solanum</taxon>
        <taxon>Solanum subgen. Lycopersicon</taxon>
    </lineage>
</organism>
<comment type="function">
    <text evidence="3 5">Possesses endo-beta-mannanase and mannan transglycosylase activities. May be involved in cell wall degradation during fruit ripening.</text>
</comment>
<comment type="catalytic activity">
    <reaction>
        <text>Random hydrolysis of (1-&gt;4)-beta-D-mannosidic linkages in mannans, galactomannans and glucomannans.</text>
        <dbReference type="EC" id="3.2.1.78"/>
    </reaction>
</comment>
<comment type="biophysicochemical properties">
    <phDependence>
        <text evidence="5">Optimum pH is 5.0 for both endo-beta-mannanase and mannan transglycosylase activities.</text>
    </phDependence>
</comment>
<comment type="subcellular location">
    <subcellularLocation>
        <location evidence="7">Secreted</location>
    </subcellularLocation>
</comment>
<comment type="tissue specificity">
    <text evidence="6">Expressed in flowers and fruit pericarp.</text>
</comment>
<comment type="similarity">
    <text evidence="7">Belongs to the glycosyl hydrolase 5 (cellulase A) family.</text>
</comment>
<reference key="1">
    <citation type="journal article" date="2002" name="Plant Physiol.">
        <title>Variation in its C-terminal amino acids determines whether endo-beta-mannanase is active or inactive in ripening tomato fruits of different cultivars.</title>
        <authorList>
            <person name="Bourgault R."/>
            <person name="Bewley J.D."/>
        </authorList>
    </citation>
    <scope>NUCLEOTIDE SEQUENCE [MRNA]</scope>
    <scope>PROTEIN SEQUENCE OF 27-39</scope>
    <scope>FUNCTION</scope>
    <scope>CHARACTERIZATION OF VARIANT 394-ARG--SER-399 DELINS ALA-LEU</scope>
    <scope>MUTAGENESIS OF 394-ARG--SER-399</scope>
    <source>
        <strain>cv. Trust</strain>
        <strain>cv. Walter</strain>
        <tissue>Pericarp</tissue>
    </source>
</reference>
<reference key="2">
    <citation type="journal article" date="2002" name="Plant Sci.">
        <title>Characterisation of an endo-(1,4)-beta-mannanase expressed in ripening tomato fruit.</title>
        <authorList>
            <person name="Carrington C.M.S."/>
            <person name="Vendrell M."/>
            <person name="Dominguez-Puigjaner E."/>
        </authorList>
    </citation>
    <scope>NUCLEOTIDE SEQUENCE [MRNA]</scope>
    <scope>TISSUE SPECIFICITY</scope>
    <source>
        <strain>cv. Castalia</strain>
        <tissue>Pericarp</tissue>
    </source>
</reference>
<reference key="3">
    <citation type="journal article" date="2006" name="Planta">
        <title>LeMAN4 endo-beta-mannanase from ripe tomato fruit can act as a mannan transglycosylase or hydrolase.</title>
        <authorList>
            <person name="Schroeder R."/>
            <person name="Wegrzyn T.F."/>
            <person name="Sharma N.N."/>
            <person name="Atkinson R.G."/>
        </authorList>
    </citation>
    <scope>PROTEIN SEQUENCE OF 27-56</scope>
    <scope>FUNCTION</scope>
    <scope>BIOPHYSICOCHEMICAL PROPERTIES</scope>
</reference>
<reference key="4">
    <citation type="journal article" date="2005" name="Protein Sci.">
        <title>Three-dimensional structure of (1,4)-beta-D-mannan mannanohydrolase from tomato fruit.</title>
        <authorList>
            <person name="Bourgault R."/>
            <person name="Oakley A.J."/>
            <person name="Bewley J.D."/>
            <person name="Wilce M.C.J."/>
        </authorList>
    </citation>
    <scope>X-RAY CRYSTALLOGRAPHY (1.5 ANGSTROMS) OF 27-399</scope>
    <scope>DISULFIDE BOND</scope>
</reference>
<evidence type="ECO:0000250" key="1">
    <source>
        <dbReference type="UniProtKB" id="B4XC07"/>
    </source>
</evidence>
<evidence type="ECO:0000250" key="2">
    <source>
        <dbReference type="UniProtKB" id="Q99036"/>
    </source>
</evidence>
<evidence type="ECO:0000269" key="3">
    <source>
    </source>
</evidence>
<evidence type="ECO:0000269" key="4">
    <source>
    </source>
</evidence>
<evidence type="ECO:0000269" key="5">
    <source>
    </source>
</evidence>
<evidence type="ECO:0000269" key="6">
    <source ref="2"/>
</evidence>
<evidence type="ECO:0000305" key="7"/>
<evidence type="ECO:0007829" key="8">
    <source>
        <dbReference type="PDB" id="1RH9"/>
    </source>
</evidence>
<proteinExistence type="evidence at protein level"/>
<keyword id="KW-0002">3D-structure</keyword>
<keyword id="KW-0903">Direct protein sequencing</keyword>
<keyword id="KW-1015">Disulfide bond</keyword>
<keyword id="KW-0326">Glycosidase</keyword>
<keyword id="KW-0378">Hydrolase</keyword>
<keyword id="KW-1185">Reference proteome</keyword>
<keyword id="KW-0964">Secreted</keyword>
<keyword id="KW-0732">Signal</keyword>
<protein>
    <recommendedName>
        <fullName>Mannan endo-1,4-beta-mannosidase 4</fullName>
        <ecNumber>3.2.1.78</ecNumber>
    </recommendedName>
    <alternativeName>
        <fullName>Beta-mannanase 4</fullName>
    </alternativeName>
    <alternativeName>
        <fullName>Endo-beta-1,4-mannanase 4</fullName>
    </alternativeName>
    <alternativeName>
        <fullName>LeMAN4a</fullName>
    </alternativeName>
    <alternativeName>
        <fullName>LeMAN4i</fullName>
    </alternativeName>
</protein>
<sequence length="399" mass="45339">MNNSIILIFVAILIIFPNEFSKPTRAFSNNNFVYTDGTHFALNGKSLYINGFNAYWLMYIAYDPSTRIKVTNTFQQASKYKMNVARTWAFSHGGSRPLQSAPGVYNEQMFQGLDFVISEAKKYGIHLIMSLVNNWDAFGGKKQYVEWAVQRGQKLTSDDDFFTNPMVKGFYKNNVKVVLTRVNTITKVAYKDDPTILSWELINEPRCPSDLSGKTFQNWVLEMAGYLKSIDSNHLLEIGLEGFYGNDMRQYNPNSYIFGTNFISNNQVQGIDFTTIHMYPNQWLPGLTQEAQDKWASQWIQVHIDDSKMLKKPLLIAEFGKSTKTPGYTVAKRDNYFEKIYGTIFNCAKSGGPCGGGLFWQVLGQGMSSFDDGYQVVLQESPSTSRVILLQSLRLSKLS</sequence>
<feature type="signal peptide" evidence="3 5">
    <location>
        <begin position="1"/>
        <end position="26"/>
    </location>
</feature>
<feature type="chain" id="PRO_0000277492" description="Mannan endo-1,4-beta-mannosidase 4">
    <location>
        <begin position="27"/>
        <end position="399"/>
    </location>
</feature>
<feature type="active site" description="Proton donor" evidence="2">
    <location>
        <position position="204"/>
    </location>
</feature>
<feature type="active site" description="Nucleophile" evidence="2">
    <location>
        <position position="318"/>
    </location>
</feature>
<feature type="binding site" evidence="1">
    <location>
        <position position="88"/>
    </location>
    <ligand>
        <name>substrate</name>
    </ligand>
</feature>
<feature type="binding site" evidence="1">
    <location>
        <position position="203"/>
    </location>
    <ligand>
        <name>substrate</name>
    </ligand>
</feature>
<feature type="binding site" evidence="1">
    <location>
        <position position="279"/>
    </location>
    <ligand>
        <name>substrate</name>
    </ligand>
</feature>
<feature type="binding site" evidence="1">
    <location>
        <position position="360"/>
    </location>
    <ligand>
        <name>substrate</name>
    </ligand>
</feature>
<feature type="disulfide bond" evidence="4">
    <location>
        <begin position="347"/>
        <end position="354"/>
    </location>
</feature>
<feature type="sequence variant" description="In strain: cv. Castalia and cv. Walter; in allele LeMAN4i; inactive enzyme." evidence="3">
    <original>RLSKLS</original>
    <variation>AL</variation>
    <location>
        <begin position="394"/>
        <end position="399"/>
    </location>
</feature>
<feature type="mutagenesis site" description="Activity reduced by 5-fold." evidence="3">
    <original>RLSKLS</original>
    <variation>ALS</variation>
    <location>
        <begin position="394"/>
        <end position="399"/>
    </location>
</feature>
<feature type="mutagenesis site" description="Activity slightly reduced.">
    <original>R</original>
    <variation>A</variation>
    <location>
        <position position="394"/>
    </location>
</feature>
<feature type="mutagenesis site" description="Activity reduced by 8-fold.">
    <location>
        <begin position="396"/>
        <end position="399"/>
    </location>
</feature>
<feature type="mutagenesis site" description="Activity reduced by 3-fold.">
    <location>
        <begin position="397"/>
        <end position="399"/>
    </location>
</feature>
<feature type="mutagenesis site" description="Activity reduced by 5-fold.">
    <location>
        <begin position="398"/>
        <end position="399"/>
    </location>
</feature>
<feature type="mutagenesis site" description="No effect on activity.">
    <location>
        <position position="399"/>
    </location>
</feature>
<feature type="sequence conflict" description="In Ref. 2; AAK56557." evidence="7" ref="2">
    <original>T</original>
    <variation>A</variation>
    <location>
        <position position="274"/>
    </location>
</feature>
<feature type="strand" evidence="8">
    <location>
        <begin position="34"/>
        <end position="36"/>
    </location>
</feature>
<feature type="strand" evidence="8">
    <location>
        <begin position="39"/>
        <end position="42"/>
    </location>
</feature>
<feature type="strand" evidence="8">
    <location>
        <begin position="45"/>
        <end position="47"/>
    </location>
</feature>
<feature type="strand" evidence="8">
    <location>
        <begin position="49"/>
        <end position="53"/>
    </location>
</feature>
<feature type="helix" evidence="8">
    <location>
        <begin position="57"/>
        <end position="62"/>
    </location>
</feature>
<feature type="turn" evidence="8">
    <location>
        <begin position="64"/>
        <end position="67"/>
    </location>
</feature>
<feature type="helix" evidence="8">
    <location>
        <begin position="68"/>
        <end position="79"/>
    </location>
</feature>
<feature type="strand" evidence="8">
    <location>
        <begin position="84"/>
        <end position="90"/>
    </location>
</feature>
<feature type="strand" evidence="8">
    <location>
        <begin position="92"/>
        <end position="96"/>
    </location>
</feature>
<feature type="strand" evidence="8">
    <location>
        <begin position="98"/>
        <end position="101"/>
    </location>
</feature>
<feature type="helix" evidence="8">
    <location>
        <begin position="107"/>
        <end position="122"/>
    </location>
</feature>
<feature type="strand" evidence="8">
    <location>
        <begin position="126"/>
        <end position="130"/>
    </location>
</feature>
<feature type="strand" evidence="8">
    <location>
        <begin position="133"/>
        <end position="140"/>
    </location>
</feature>
<feature type="helix" evidence="8">
    <location>
        <begin position="141"/>
        <end position="150"/>
    </location>
</feature>
<feature type="helix" evidence="8">
    <location>
        <begin position="158"/>
        <end position="162"/>
    </location>
</feature>
<feature type="helix" evidence="8">
    <location>
        <begin position="165"/>
        <end position="180"/>
    </location>
</feature>
<feature type="turn" evidence="8">
    <location>
        <begin position="184"/>
        <end position="186"/>
    </location>
</feature>
<feature type="helix" evidence="8">
    <location>
        <begin position="190"/>
        <end position="192"/>
    </location>
</feature>
<feature type="strand" evidence="8">
    <location>
        <begin position="196"/>
        <end position="201"/>
    </location>
</feature>
<feature type="helix" evidence="8">
    <location>
        <begin position="214"/>
        <end position="230"/>
    </location>
</feature>
<feature type="strand" evidence="8">
    <location>
        <begin position="233"/>
        <end position="237"/>
    </location>
</feature>
<feature type="helix" evidence="8">
    <location>
        <begin position="246"/>
        <end position="251"/>
    </location>
</feature>
<feature type="helix" evidence="8">
    <location>
        <begin position="253"/>
        <end position="255"/>
    </location>
</feature>
<feature type="helix" evidence="8">
    <location>
        <begin position="262"/>
        <end position="266"/>
    </location>
</feature>
<feature type="strand" evidence="8">
    <location>
        <begin position="274"/>
        <end position="277"/>
    </location>
</feature>
<feature type="helix" evidence="8">
    <location>
        <begin position="280"/>
        <end position="283"/>
    </location>
</feature>
<feature type="helix" evidence="8">
    <location>
        <begin position="289"/>
        <end position="310"/>
    </location>
</feature>
<feature type="strand" evidence="8">
    <location>
        <begin position="314"/>
        <end position="318"/>
    </location>
</feature>
<feature type="helix" evidence="8">
    <location>
        <begin position="330"/>
        <end position="349"/>
    </location>
</feature>
<feature type="strand" evidence="8">
    <location>
        <begin position="353"/>
        <end position="360"/>
    </location>
</feature>
<feature type="helix" evidence="8">
    <location>
        <begin position="368"/>
        <end position="370"/>
    </location>
</feature>
<feature type="helix" evidence="8">
    <location>
        <begin position="378"/>
        <end position="380"/>
    </location>
</feature>
<feature type="helix" evidence="8">
    <location>
        <begin position="382"/>
        <end position="395"/>
    </location>
</feature>
<accession>Q8L5J1</accession>
<accession>Q8RVL3</accession>
<accession>Q93WT4</accession>